<name>SSRP_PECAS</name>
<gene>
    <name evidence="1" type="primary">smpB</name>
    <name type="ordered locus">ECA0836</name>
</gene>
<organism>
    <name type="scientific">Pectobacterium atrosepticum (strain SCRI 1043 / ATCC BAA-672)</name>
    <name type="common">Erwinia carotovora subsp. atroseptica</name>
    <dbReference type="NCBI Taxonomy" id="218491"/>
    <lineage>
        <taxon>Bacteria</taxon>
        <taxon>Pseudomonadati</taxon>
        <taxon>Pseudomonadota</taxon>
        <taxon>Gammaproteobacteria</taxon>
        <taxon>Enterobacterales</taxon>
        <taxon>Pectobacteriaceae</taxon>
        <taxon>Pectobacterium</taxon>
    </lineage>
</organism>
<proteinExistence type="inferred from homology"/>
<dbReference type="EMBL" id="BX950851">
    <property type="protein sequence ID" value="CAG73749.1"/>
    <property type="molecule type" value="Genomic_DNA"/>
</dbReference>
<dbReference type="RefSeq" id="WP_011092441.1">
    <property type="nucleotide sequence ID" value="NC_004547.2"/>
</dbReference>
<dbReference type="SMR" id="Q6D8Y5"/>
<dbReference type="STRING" id="218491.ECA0836"/>
<dbReference type="GeneID" id="57207581"/>
<dbReference type="KEGG" id="eca:ECA0836"/>
<dbReference type="PATRIC" id="fig|218491.5.peg.837"/>
<dbReference type="eggNOG" id="COG0691">
    <property type="taxonomic scope" value="Bacteria"/>
</dbReference>
<dbReference type="HOGENOM" id="CLU_108953_3_0_6"/>
<dbReference type="OrthoDB" id="9805462at2"/>
<dbReference type="Proteomes" id="UP000007966">
    <property type="component" value="Chromosome"/>
</dbReference>
<dbReference type="GO" id="GO:0005829">
    <property type="term" value="C:cytosol"/>
    <property type="evidence" value="ECO:0007669"/>
    <property type="project" value="TreeGrafter"/>
</dbReference>
<dbReference type="GO" id="GO:0003723">
    <property type="term" value="F:RNA binding"/>
    <property type="evidence" value="ECO:0007669"/>
    <property type="project" value="UniProtKB-UniRule"/>
</dbReference>
<dbReference type="GO" id="GO:0070929">
    <property type="term" value="P:trans-translation"/>
    <property type="evidence" value="ECO:0007669"/>
    <property type="project" value="UniProtKB-UniRule"/>
</dbReference>
<dbReference type="CDD" id="cd09294">
    <property type="entry name" value="SmpB"/>
    <property type="match status" value="1"/>
</dbReference>
<dbReference type="Gene3D" id="2.40.280.10">
    <property type="match status" value="1"/>
</dbReference>
<dbReference type="HAMAP" id="MF_00023">
    <property type="entry name" value="SmpB"/>
    <property type="match status" value="1"/>
</dbReference>
<dbReference type="InterPro" id="IPR023620">
    <property type="entry name" value="SmpB"/>
</dbReference>
<dbReference type="InterPro" id="IPR000037">
    <property type="entry name" value="SsrA-bd_prot"/>
</dbReference>
<dbReference type="InterPro" id="IPR020081">
    <property type="entry name" value="SsrA-bd_prot_CS"/>
</dbReference>
<dbReference type="NCBIfam" id="NF003843">
    <property type="entry name" value="PRK05422.1"/>
    <property type="match status" value="1"/>
</dbReference>
<dbReference type="NCBIfam" id="TIGR00086">
    <property type="entry name" value="smpB"/>
    <property type="match status" value="1"/>
</dbReference>
<dbReference type="PANTHER" id="PTHR30308:SF2">
    <property type="entry name" value="SSRA-BINDING PROTEIN"/>
    <property type="match status" value="1"/>
</dbReference>
<dbReference type="PANTHER" id="PTHR30308">
    <property type="entry name" value="TMRNA-BINDING COMPONENT OF TRANS-TRANSLATION TAGGING COMPLEX"/>
    <property type="match status" value="1"/>
</dbReference>
<dbReference type="Pfam" id="PF01668">
    <property type="entry name" value="SmpB"/>
    <property type="match status" value="1"/>
</dbReference>
<dbReference type="SUPFAM" id="SSF74982">
    <property type="entry name" value="Small protein B (SmpB)"/>
    <property type="match status" value="1"/>
</dbReference>
<dbReference type="PROSITE" id="PS01317">
    <property type="entry name" value="SSRP"/>
    <property type="match status" value="1"/>
</dbReference>
<protein>
    <recommendedName>
        <fullName evidence="1">SsrA-binding protein</fullName>
    </recommendedName>
    <alternativeName>
        <fullName evidence="1">Small protein B</fullName>
    </alternativeName>
</protein>
<evidence type="ECO:0000255" key="1">
    <source>
        <dbReference type="HAMAP-Rule" id="MF_00023"/>
    </source>
</evidence>
<keyword id="KW-0963">Cytoplasm</keyword>
<keyword id="KW-1185">Reference proteome</keyword>
<keyword id="KW-0694">RNA-binding</keyword>
<comment type="function">
    <text evidence="1">Required for rescue of stalled ribosomes mediated by trans-translation. Binds to transfer-messenger RNA (tmRNA), required for stable association of tmRNA with ribosomes. tmRNA and SmpB together mimic tRNA shape, replacing the anticodon stem-loop with SmpB. tmRNA is encoded by the ssrA gene; the 2 termini fold to resemble tRNA(Ala) and it encodes a 'tag peptide', a short internal open reading frame. During trans-translation Ala-aminoacylated tmRNA acts like a tRNA, entering the A-site of stalled ribosomes, displacing the stalled mRNA. The ribosome then switches to translate the ORF on the tmRNA; the nascent peptide is terminated with the 'tag peptide' encoded by the tmRNA and targeted for degradation. The ribosome is freed to recommence translation, which seems to be the essential function of trans-translation.</text>
</comment>
<comment type="subcellular location">
    <subcellularLocation>
        <location evidence="1">Cytoplasm</location>
    </subcellularLocation>
    <text evidence="1">The tmRNA-SmpB complex associates with stalled 70S ribosomes.</text>
</comment>
<comment type="similarity">
    <text evidence="1">Belongs to the SmpB family.</text>
</comment>
<accession>Q6D8Y5</accession>
<sequence>MTKKKAYKPGSATIAQNKRARHEYSIEEEFEAGLVLQGWEVKSLRAGKANLSDSYVTFMNGEAYLFGATITPLNVASSHVVCDPIRTRKLLLNKREMDSLFGRVSRDGYTVVALSMYWKNAWSKVKIGVAKGKKDHDKRDDIKEREWKLDKARIMKNANR</sequence>
<reference key="1">
    <citation type="journal article" date="2004" name="Proc. Natl. Acad. Sci. U.S.A.">
        <title>Genome sequence of the enterobacterial phytopathogen Erwinia carotovora subsp. atroseptica and characterization of virulence factors.</title>
        <authorList>
            <person name="Bell K.S."/>
            <person name="Sebaihia M."/>
            <person name="Pritchard L."/>
            <person name="Holden M.T.G."/>
            <person name="Hyman L.J."/>
            <person name="Holeva M.C."/>
            <person name="Thomson N.R."/>
            <person name="Bentley S.D."/>
            <person name="Churcher L.J.C."/>
            <person name="Mungall K."/>
            <person name="Atkin R."/>
            <person name="Bason N."/>
            <person name="Brooks K."/>
            <person name="Chillingworth T."/>
            <person name="Clark K."/>
            <person name="Doggett J."/>
            <person name="Fraser A."/>
            <person name="Hance Z."/>
            <person name="Hauser H."/>
            <person name="Jagels K."/>
            <person name="Moule S."/>
            <person name="Norbertczak H."/>
            <person name="Ormond D."/>
            <person name="Price C."/>
            <person name="Quail M.A."/>
            <person name="Sanders M."/>
            <person name="Walker D."/>
            <person name="Whitehead S."/>
            <person name="Salmond G.P.C."/>
            <person name="Birch P.R.J."/>
            <person name="Parkhill J."/>
            <person name="Toth I.K."/>
        </authorList>
    </citation>
    <scope>NUCLEOTIDE SEQUENCE [LARGE SCALE GENOMIC DNA]</scope>
    <source>
        <strain>SCRI 1043 / ATCC BAA-672</strain>
    </source>
</reference>
<feature type="chain" id="PRO_0000102949" description="SsrA-binding protein">
    <location>
        <begin position="1"/>
        <end position="160"/>
    </location>
</feature>